<gene>
    <name evidence="1" type="primary">pyrG</name>
    <name type="ordered locus">Acid345_3670</name>
</gene>
<organism>
    <name type="scientific">Koribacter versatilis (strain Ellin345)</name>
    <dbReference type="NCBI Taxonomy" id="204669"/>
    <lineage>
        <taxon>Bacteria</taxon>
        <taxon>Pseudomonadati</taxon>
        <taxon>Acidobacteriota</taxon>
        <taxon>Terriglobia</taxon>
        <taxon>Terriglobales</taxon>
        <taxon>Candidatus Korobacteraceae</taxon>
        <taxon>Candidatus Korobacter</taxon>
    </lineage>
</organism>
<feature type="chain" id="PRO_0000266048" description="CTP synthase">
    <location>
        <begin position="1"/>
        <end position="558"/>
    </location>
</feature>
<feature type="domain" description="Glutamine amidotransferase type-1" evidence="1">
    <location>
        <begin position="291"/>
        <end position="537"/>
    </location>
</feature>
<feature type="region of interest" description="Amidoligase domain" evidence="1">
    <location>
        <begin position="1"/>
        <end position="266"/>
    </location>
</feature>
<feature type="region of interest" description="Disordered" evidence="2">
    <location>
        <begin position="539"/>
        <end position="558"/>
    </location>
</feature>
<feature type="compositionally biased region" description="Basic and acidic residues" evidence="2">
    <location>
        <begin position="542"/>
        <end position="558"/>
    </location>
</feature>
<feature type="active site" description="Nucleophile; for glutamine hydrolysis" evidence="1">
    <location>
        <position position="382"/>
    </location>
</feature>
<feature type="active site" evidence="1">
    <location>
        <position position="510"/>
    </location>
</feature>
<feature type="active site" evidence="1">
    <location>
        <position position="512"/>
    </location>
</feature>
<feature type="binding site" evidence="1">
    <location>
        <position position="14"/>
    </location>
    <ligand>
        <name>CTP</name>
        <dbReference type="ChEBI" id="CHEBI:37563"/>
        <note>allosteric inhibitor</note>
    </ligand>
</feature>
<feature type="binding site" evidence="1">
    <location>
        <position position="14"/>
    </location>
    <ligand>
        <name>UTP</name>
        <dbReference type="ChEBI" id="CHEBI:46398"/>
    </ligand>
</feature>
<feature type="binding site" evidence="1">
    <location>
        <begin position="15"/>
        <end position="20"/>
    </location>
    <ligand>
        <name>ATP</name>
        <dbReference type="ChEBI" id="CHEBI:30616"/>
    </ligand>
</feature>
<feature type="binding site" evidence="1">
    <location>
        <position position="72"/>
    </location>
    <ligand>
        <name>ATP</name>
        <dbReference type="ChEBI" id="CHEBI:30616"/>
    </ligand>
</feature>
<feature type="binding site" evidence="1">
    <location>
        <position position="72"/>
    </location>
    <ligand>
        <name>Mg(2+)</name>
        <dbReference type="ChEBI" id="CHEBI:18420"/>
    </ligand>
</feature>
<feature type="binding site" evidence="1">
    <location>
        <position position="140"/>
    </location>
    <ligand>
        <name>Mg(2+)</name>
        <dbReference type="ChEBI" id="CHEBI:18420"/>
    </ligand>
</feature>
<feature type="binding site" evidence="1">
    <location>
        <begin position="147"/>
        <end position="149"/>
    </location>
    <ligand>
        <name>CTP</name>
        <dbReference type="ChEBI" id="CHEBI:37563"/>
        <note>allosteric inhibitor</note>
    </ligand>
</feature>
<feature type="binding site" evidence="1">
    <location>
        <begin position="187"/>
        <end position="192"/>
    </location>
    <ligand>
        <name>CTP</name>
        <dbReference type="ChEBI" id="CHEBI:37563"/>
        <note>allosteric inhibitor</note>
    </ligand>
</feature>
<feature type="binding site" evidence="1">
    <location>
        <begin position="187"/>
        <end position="192"/>
    </location>
    <ligand>
        <name>UTP</name>
        <dbReference type="ChEBI" id="CHEBI:46398"/>
    </ligand>
</feature>
<feature type="binding site" evidence="1">
    <location>
        <position position="223"/>
    </location>
    <ligand>
        <name>CTP</name>
        <dbReference type="ChEBI" id="CHEBI:37563"/>
        <note>allosteric inhibitor</note>
    </ligand>
</feature>
<feature type="binding site" evidence="1">
    <location>
        <position position="223"/>
    </location>
    <ligand>
        <name>UTP</name>
        <dbReference type="ChEBI" id="CHEBI:46398"/>
    </ligand>
</feature>
<feature type="binding site" evidence="1">
    <location>
        <begin position="239"/>
        <end position="241"/>
    </location>
    <ligand>
        <name>ATP</name>
        <dbReference type="ChEBI" id="CHEBI:30616"/>
    </ligand>
</feature>
<feature type="binding site" evidence="1">
    <location>
        <position position="355"/>
    </location>
    <ligand>
        <name>L-glutamine</name>
        <dbReference type="ChEBI" id="CHEBI:58359"/>
    </ligand>
</feature>
<feature type="binding site" evidence="1">
    <location>
        <begin position="383"/>
        <end position="386"/>
    </location>
    <ligand>
        <name>L-glutamine</name>
        <dbReference type="ChEBI" id="CHEBI:58359"/>
    </ligand>
</feature>
<feature type="binding site" evidence="1">
    <location>
        <position position="406"/>
    </location>
    <ligand>
        <name>L-glutamine</name>
        <dbReference type="ChEBI" id="CHEBI:58359"/>
    </ligand>
</feature>
<feature type="binding site" evidence="1">
    <location>
        <position position="463"/>
    </location>
    <ligand>
        <name>L-glutamine</name>
        <dbReference type="ChEBI" id="CHEBI:58359"/>
    </ligand>
</feature>
<accession>Q1IKC9</accession>
<evidence type="ECO:0000255" key="1">
    <source>
        <dbReference type="HAMAP-Rule" id="MF_01227"/>
    </source>
</evidence>
<evidence type="ECO:0000256" key="2">
    <source>
        <dbReference type="SAM" id="MobiDB-lite"/>
    </source>
</evidence>
<sequence>MSAKYIFVTGGVVSSLGKGLAAASIGCLLEMRGLKVNMQKFDPYLNVDPGTMSPFQHGEVFVTDDGAETDLDLGHYERYTHSKLTRENNWTTGRIYEQIITKERRGDYLGKTVQVIPHVTNEIKAAMKRAAVDVDVAIVEIGGTVGDIESLPFIEAIRQMRQELGRDNTLFVHLTLVPYIAAAGELKTKPTQHSVKELLSIGIQPDILLCRTDRFLSKDIKGKIALFCNVEDEAVITAKDVASIYEVPLGFHHEGVDRLVMKYLRLDAKEPDLTRWQDIVHRVYNPKDEVIIGIIGKYVEYEDSYKSLKEALVHGSLAHNLKLNVTWIEAEGLETKDESYYEQLRHVDGILVPGGFGKRGIAGMLNGIRFAREHKVPYFGICLGMQTASIEFARNVCGLEDANSSEFDPATPHRVIYKLRELRGVEELGGTMRLGAWACKLEPGSHAAKAYGTTEISERHRHRYEFNQEYREQMAAAGLKFTGTTPDGTYIEIVELDQNEHPYFLGCQFHPEFKSKPLEPHPLFKAFIGASYEHRMKRTHTKEREEESVFLRPERVGK</sequence>
<reference key="1">
    <citation type="journal article" date="2009" name="Appl. Environ. Microbiol.">
        <title>Three genomes from the phylum Acidobacteria provide insight into the lifestyles of these microorganisms in soils.</title>
        <authorList>
            <person name="Ward N.L."/>
            <person name="Challacombe J.F."/>
            <person name="Janssen P.H."/>
            <person name="Henrissat B."/>
            <person name="Coutinho P.M."/>
            <person name="Wu M."/>
            <person name="Xie G."/>
            <person name="Haft D.H."/>
            <person name="Sait M."/>
            <person name="Badger J."/>
            <person name="Barabote R.D."/>
            <person name="Bradley B."/>
            <person name="Brettin T.S."/>
            <person name="Brinkac L.M."/>
            <person name="Bruce D."/>
            <person name="Creasy T."/>
            <person name="Daugherty S.C."/>
            <person name="Davidsen T.M."/>
            <person name="DeBoy R.T."/>
            <person name="Detter J.C."/>
            <person name="Dodson R.J."/>
            <person name="Durkin A.S."/>
            <person name="Ganapathy A."/>
            <person name="Gwinn-Giglio M."/>
            <person name="Han C.S."/>
            <person name="Khouri H."/>
            <person name="Kiss H."/>
            <person name="Kothari S.P."/>
            <person name="Madupu R."/>
            <person name="Nelson K.E."/>
            <person name="Nelson W.C."/>
            <person name="Paulsen I."/>
            <person name="Penn K."/>
            <person name="Ren Q."/>
            <person name="Rosovitz M.J."/>
            <person name="Selengut J.D."/>
            <person name="Shrivastava S."/>
            <person name="Sullivan S.A."/>
            <person name="Tapia R."/>
            <person name="Thompson L.S."/>
            <person name="Watkins K.L."/>
            <person name="Yang Q."/>
            <person name="Yu C."/>
            <person name="Zafar N."/>
            <person name="Zhou L."/>
            <person name="Kuske C.R."/>
        </authorList>
    </citation>
    <scope>NUCLEOTIDE SEQUENCE [LARGE SCALE GENOMIC DNA]</scope>
    <source>
        <strain>Ellin345</strain>
    </source>
</reference>
<name>PYRG_KORVE</name>
<comment type="function">
    <text evidence="1">Catalyzes the ATP-dependent amination of UTP to CTP with either L-glutamine or ammonia as the source of nitrogen. Regulates intracellular CTP levels through interactions with the four ribonucleotide triphosphates.</text>
</comment>
<comment type="catalytic activity">
    <reaction evidence="1">
        <text>UTP + L-glutamine + ATP + H2O = CTP + L-glutamate + ADP + phosphate + 2 H(+)</text>
        <dbReference type="Rhea" id="RHEA:26426"/>
        <dbReference type="ChEBI" id="CHEBI:15377"/>
        <dbReference type="ChEBI" id="CHEBI:15378"/>
        <dbReference type="ChEBI" id="CHEBI:29985"/>
        <dbReference type="ChEBI" id="CHEBI:30616"/>
        <dbReference type="ChEBI" id="CHEBI:37563"/>
        <dbReference type="ChEBI" id="CHEBI:43474"/>
        <dbReference type="ChEBI" id="CHEBI:46398"/>
        <dbReference type="ChEBI" id="CHEBI:58359"/>
        <dbReference type="ChEBI" id="CHEBI:456216"/>
        <dbReference type="EC" id="6.3.4.2"/>
    </reaction>
</comment>
<comment type="catalytic activity">
    <reaction evidence="1">
        <text>L-glutamine + H2O = L-glutamate + NH4(+)</text>
        <dbReference type="Rhea" id="RHEA:15889"/>
        <dbReference type="ChEBI" id="CHEBI:15377"/>
        <dbReference type="ChEBI" id="CHEBI:28938"/>
        <dbReference type="ChEBI" id="CHEBI:29985"/>
        <dbReference type="ChEBI" id="CHEBI:58359"/>
    </reaction>
</comment>
<comment type="catalytic activity">
    <reaction evidence="1">
        <text>UTP + NH4(+) + ATP = CTP + ADP + phosphate + 2 H(+)</text>
        <dbReference type="Rhea" id="RHEA:16597"/>
        <dbReference type="ChEBI" id="CHEBI:15378"/>
        <dbReference type="ChEBI" id="CHEBI:28938"/>
        <dbReference type="ChEBI" id="CHEBI:30616"/>
        <dbReference type="ChEBI" id="CHEBI:37563"/>
        <dbReference type="ChEBI" id="CHEBI:43474"/>
        <dbReference type="ChEBI" id="CHEBI:46398"/>
        <dbReference type="ChEBI" id="CHEBI:456216"/>
    </reaction>
</comment>
<comment type="activity regulation">
    <text evidence="1">Allosterically activated by GTP, when glutamine is the substrate; GTP has no effect on the reaction when ammonia is the substrate. The allosteric effector GTP functions by stabilizing the protein conformation that binds the tetrahedral intermediate(s) formed during glutamine hydrolysis. Inhibited by the product CTP, via allosteric rather than competitive inhibition.</text>
</comment>
<comment type="pathway">
    <text evidence="1">Pyrimidine metabolism; CTP biosynthesis via de novo pathway; CTP from UDP: step 2/2.</text>
</comment>
<comment type="subunit">
    <text evidence="1">Homotetramer.</text>
</comment>
<comment type="miscellaneous">
    <text evidence="1">CTPSs have evolved a hybrid strategy for distinguishing between UTP and CTP. The overlapping regions of the product feedback inhibitory and substrate sites recognize a common feature in both compounds, the triphosphate moiety. To differentiate isosteric substrate and product pyrimidine rings, an additional pocket far from the expected kinase/ligase catalytic site, specifically recognizes the cytosine and ribose portions of the product inhibitor.</text>
</comment>
<comment type="similarity">
    <text evidence="1">Belongs to the CTP synthase family.</text>
</comment>
<proteinExistence type="inferred from homology"/>
<keyword id="KW-0067">ATP-binding</keyword>
<keyword id="KW-0315">Glutamine amidotransferase</keyword>
<keyword id="KW-0436">Ligase</keyword>
<keyword id="KW-0460">Magnesium</keyword>
<keyword id="KW-0479">Metal-binding</keyword>
<keyword id="KW-0547">Nucleotide-binding</keyword>
<keyword id="KW-0665">Pyrimidine biosynthesis</keyword>
<keyword id="KW-1185">Reference proteome</keyword>
<protein>
    <recommendedName>
        <fullName evidence="1">CTP synthase</fullName>
        <ecNumber evidence="1">6.3.4.2</ecNumber>
    </recommendedName>
    <alternativeName>
        <fullName evidence="1">Cytidine 5'-triphosphate synthase</fullName>
    </alternativeName>
    <alternativeName>
        <fullName evidence="1">Cytidine triphosphate synthetase</fullName>
        <shortName evidence="1">CTP synthetase</shortName>
        <shortName evidence="1">CTPS</shortName>
    </alternativeName>
    <alternativeName>
        <fullName evidence="1">UTP--ammonia ligase</fullName>
    </alternativeName>
</protein>
<dbReference type="EC" id="6.3.4.2" evidence="1"/>
<dbReference type="EMBL" id="CP000360">
    <property type="protein sequence ID" value="ABF42671.1"/>
    <property type="molecule type" value="Genomic_DNA"/>
</dbReference>
<dbReference type="RefSeq" id="WP_011524470.1">
    <property type="nucleotide sequence ID" value="NC_008009.1"/>
</dbReference>
<dbReference type="SMR" id="Q1IKC9"/>
<dbReference type="STRING" id="204669.Acid345_3670"/>
<dbReference type="EnsemblBacteria" id="ABF42671">
    <property type="protein sequence ID" value="ABF42671"/>
    <property type="gene ID" value="Acid345_3670"/>
</dbReference>
<dbReference type="KEGG" id="aba:Acid345_3670"/>
<dbReference type="eggNOG" id="COG0504">
    <property type="taxonomic scope" value="Bacteria"/>
</dbReference>
<dbReference type="HOGENOM" id="CLU_011675_5_0_0"/>
<dbReference type="OrthoDB" id="9801107at2"/>
<dbReference type="UniPathway" id="UPA00159">
    <property type="reaction ID" value="UER00277"/>
</dbReference>
<dbReference type="Proteomes" id="UP000002432">
    <property type="component" value="Chromosome"/>
</dbReference>
<dbReference type="GO" id="GO:0005829">
    <property type="term" value="C:cytosol"/>
    <property type="evidence" value="ECO:0007669"/>
    <property type="project" value="TreeGrafter"/>
</dbReference>
<dbReference type="GO" id="GO:0005524">
    <property type="term" value="F:ATP binding"/>
    <property type="evidence" value="ECO:0007669"/>
    <property type="project" value="UniProtKB-KW"/>
</dbReference>
<dbReference type="GO" id="GO:0003883">
    <property type="term" value="F:CTP synthase activity"/>
    <property type="evidence" value="ECO:0007669"/>
    <property type="project" value="UniProtKB-UniRule"/>
</dbReference>
<dbReference type="GO" id="GO:0004359">
    <property type="term" value="F:glutaminase activity"/>
    <property type="evidence" value="ECO:0007669"/>
    <property type="project" value="RHEA"/>
</dbReference>
<dbReference type="GO" id="GO:0042802">
    <property type="term" value="F:identical protein binding"/>
    <property type="evidence" value="ECO:0007669"/>
    <property type="project" value="TreeGrafter"/>
</dbReference>
<dbReference type="GO" id="GO:0046872">
    <property type="term" value="F:metal ion binding"/>
    <property type="evidence" value="ECO:0007669"/>
    <property type="project" value="UniProtKB-KW"/>
</dbReference>
<dbReference type="GO" id="GO:0044210">
    <property type="term" value="P:'de novo' CTP biosynthetic process"/>
    <property type="evidence" value="ECO:0007669"/>
    <property type="project" value="UniProtKB-UniRule"/>
</dbReference>
<dbReference type="GO" id="GO:0019856">
    <property type="term" value="P:pyrimidine nucleobase biosynthetic process"/>
    <property type="evidence" value="ECO:0007669"/>
    <property type="project" value="TreeGrafter"/>
</dbReference>
<dbReference type="CDD" id="cd03113">
    <property type="entry name" value="CTPS_N"/>
    <property type="match status" value="1"/>
</dbReference>
<dbReference type="CDD" id="cd01746">
    <property type="entry name" value="GATase1_CTP_Synthase"/>
    <property type="match status" value="1"/>
</dbReference>
<dbReference type="FunFam" id="3.40.50.300:FF:000009">
    <property type="entry name" value="CTP synthase"/>
    <property type="match status" value="1"/>
</dbReference>
<dbReference type="FunFam" id="3.40.50.880:FF:000002">
    <property type="entry name" value="CTP synthase"/>
    <property type="match status" value="1"/>
</dbReference>
<dbReference type="Gene3D" id="3.40.50.880">
    <property type="match status" value="1"/>
</dbReference>
<dbReference type="Gene3D" id="3.40.50.300">
    <property type="entry name" value="P-loop containing nucleotide triphosphate hydrolases"/>
    <property type="match status" value="1"/>
</dbReference>
<dbReference type="HAMAP" id="MF_01227">
    <property type="entry name" value="PyrG"/>
    <property type="match status" value="1"/>
</dbReference>
<dbReference type="InterPro" id="IPR029062">
    <property type="entry name" value="Class_I_gatase-like"/>
</dbReference>
<dbReference type="InterPro" id="IPR004468">
    <property type="entry name" value="CTP_synthase"/>
</dbReference>
<dbReference type="InterPro" id="IPR017456">
    <property type="entry name" value="CTP_synthase_N"/>
</dbReference>
<dbReference type="InterPro" id="IPR017926">
    <property type="entry name" value="GATASE"/>
</dbReference>
<dbReference type="InterPro" id="IPR033828">
    <property type="entry name" value="GATase1_CTP_Synthase"/>
</dbReference>
<dbReference type="InterPro" id="IPR027417">
    <property type="entry name" value="P-loop_NTPase"/>
</dbReference>
<dbReference type="NCBIfam" id="NF003792">
    <property type="entry name" value="PRK05380.1"/>
    <property type="match status" value="1"/>
</dbReference>
<dbReference type="NCBIfam" id="TIGR00337">
    <property type="entry name" value="PyrG"/>
    <property type="match status" value="1"/>
</dbReference>
<dbReference type="PANTHER" id="PTHR11550">
    <property type="entry name" value="CTP SYNTHASE"/>
    <property type="match status" value="1"/>
</dbReference>
<dbReference type="PANTHER" id="PTHR11550:SF0">
    <property type="entry name" value="CTP SYNTHASE-RELATED"/>
    <property type="match status" value="1"/>
</dbReference>
<dbReference type="Pfam" id="PF06418">
    <property type="entry name" value="CTP_synth_N"/>
    <property type="match status" value="1"/>
</dbReference>
<dbReference type="Pfam" id="PF00117">
    <property type="entry name" value="GATase"/>
    <property type="match status" value="1"/>
</dbReference>
<dbReference type="SUPFAM" id="SSF52317">
    <property type="entry name" value="Class I glutamine amidotransferase-like"/>
    <property type="match status" value="1"/>
</dbReference>
<dbReference type="SUPFAM" id="SSF52540">
    <property type="entry name" value="P-loop containing nucleoside triphosphate hydrolases"/>
    <property type="match status" value="1"/>
</dbReference>
<dbReference type="PROSITE" id="PS51273">
    <property type="entry name" value="GATASE_TYPE_1"/>
    <property type="match status" value="1"/>
</dbReference>